<proteinExistence type="inferred from homology"/>
<feature type="chain" id="PRO_1000144046" description="Large ribosomal subunit protein uL6">
    <location>
        <begin position="1"/>
        <end position="177"/>
    </location>
</feature>
<sequence length="177" mass="18860">MSRVAKAPVVVPAGVDVKINGQVITIKGKNGELTRTLNDAVEVKHADNALTFGPRDGYADGWAQAGTARALLNSMVIGVTEGFTKKLQLVGVGYRAAVKGNVVNLSLGFSHPVDHQLPAGITAECPTQTEIVLKGADKQVIGQVAADLRAYRRPEPYKGKGVRYADEVVRTKEAKKK</sequence>
<dbReference type="EMBL" id="FM200053">
    <property type="protein sequence ID" value="CAR61321.1"/>
    <property type="molecule type" value="Genomic_DNA"/>
</dbReference>
<dbReference type="RefSeq" id="WP_000091939.1">
    <property type="nucleotide sequence ID" value="NC_011147.1"/>
</dbReference>
<dbReference type="SMR" id="B5BGX1"/>
<dbReference type="KEGG" id="sek:SSPA3070"/>
<dbReference type="HOGENOM" id="CLU_065464_1_2_6"/>
<dbReference type="Proteomes" id="UP000001869">
    <property type="component" value="Chromosome"/>
</dbReference>
<dbReference type="GO" id="GO:0022625">
    <property type="term" value="C:cytosolic large ribosomal subunit"/>
    <property type="evidence" value="ECO:0007669"/>
    <property type="project" value="TreeGrafter"/>
</dbReference>
<dbReference type="GO" id="GO:0019843">
    <property type="term" value="F:rRNA binding"/>
    <property type="evidence" value="ECO:0007669"/>
    <property type="project" value="UniProtKB-UniRule"/>
</dbReference>
<dbReference type="GO" id="GO:0003735">
    <property type="term" value="F:structural constituent of ribosome"/>
    <property type="evidence" value="ECO:0007669"/>
    <property type="project" value="InterPro"/>
</dbReference>
<dbReference type="GO" id="GO:0002181">
    <property type="term" value="P:cytoplasmic translation"/>
    <property type="evidence" value="ECO:0007669"/>
    <property type="project" value="TreeGrafter"/>
</dbReference>
<dbReference type="FunFam" id="3.90.930.12:FF:000001">
    <property type="entry name" value="50S ribosomal protein L6"/>
    <property type="match status" value="1"/>
</dbReference>
<dbReference type="FunFam" id="3.90.930.12:FF:000002">
    <property type="entry name" value="50S ribosomal protein L6"/>
    <property type="match status" value="1"/>
</dbReference>
<dbReference type="Gene3D" id="3.90.930.12">
    <property type="entry name" value="Ribosomal protein L6, alpha-beta domain"/>
    <property type="match status" value="2"/>
</dbReference>
<dbReference type="HAMAP" id="MF_01365_B">
    <property type="entry name" value="Ribosomal_uL6_B"/>
    <property type="match status" value="1"/>
</dbReference>
<dbReference type="InterPro" id="IPR000702">
    <property type="entry name" value="Ribosomal_uL6-like"/>
</dbReference>
<dbReference type="InterPro" id="IPR036789">
    <property type="entry name" value="Ribosomal_uL6-like_a/b-dom_sf"/>
</dbReference>
<dbReference type="InterPro" id="IPR020040">
    <property type="entry name" value="Ribosomal_uL6_a/b-dom"/>
</dbReference>
<dbReference type="InterPro" id="IPR019906">
    <property type="entry name" value="Ribosomal_uL6_bac-type"/>
</dbReference>
<dbReference type="InterPro" id="IPR002358">
    <property type="entry name" value="Ribosomal_uL6_CS"/>
</dbReference>
<dbReference type="NCBIfam" id="TIGR03654">
    <property type="entry name" value="L6_bact"/>
    <property type="match status" value="1"/>
</dbReference>
<dbReference type="PANTHER" id="PTHR11655">
    <property type="entry name" value="60S/50S RIBOSOMAL PROTEIN L6/L9"/>
    <property type="match status" value="1"/>
</dbReference>
<dbReference type="PANTHER" id="PTHR11655:SF14">
    <property type="entry name" value="LARGE RIBOSOMAL SUBUNIT PROTEIN UL6M"/>
    <property type="match status" value="1"/>
</dbReference>
<dbReference type="Pfam" id="PF00347">
    <property type="entry name" value="Ribosomal_L6"/>
    <property type="match status" value="2"/>
</dbReference>
<dbReference type="PIRSF" id="PIRSF002162">
    <property type="entry name" value="Ribosomal_L6"/>
    <property type="match status" value="1"/>
</dbReference>
<dbReference type="PRINTS" id="PR00059">
    <property type="entry name" value="RIBOSOMALL6"/>
</dbReference>
<dbReference type="SUPFAM" id="SSF56053">
    <property type="entry name" value="Ribosomal protein L6"/>
    <property type="match status" value="2"/>
</dbReference>
<dbReference type="PROSITE" id="PS00525">
    <property type="entry name" value="RIBOSOMAL_L6_1"/>
    <property type="match status" value="1"/>
</dbReference>
<organism>
    <name type="scientific">Salmonella paratyphi A (strain AKU_12601)</name>
    <dbReference type="NCBI Taxonomy" id="554290"/>
    <lineage>
        <taxon>Bacteria</taxon>
        <taxon>Pseudomonadati</taxon>
        <taxon>Pseudomonadota</taxon>
        <taxon>Gammaproteobacteria</taxon>
        <taxon>Enterobacterales</taxon>
        <taxon>Enterobacteriaceae</taxon>
        <taxon>Salmonella</taxon>
    </lineage>
</organism>
<gene>
    <name evidence="1" type="primary">rplF</name>
    <name type="ordered locus">SSPA3070</name>
</gene>
<comment type="function">
    <text evidence="1">This protein binds to the 23S rRNA, and is important in its secondary structure. It is located near the subunit interface in the base of the L7/L12 stalk, and near the tRNA binding site of the peptidyltransferase center.</text>
</comment>
<comment type="subunit">
    <text evidence="1">Part of the 50S ribosomal subunit.</text>
</comment>
<comment type="similarity">
    <text evidence="1">Belongs to the universal ribosomal protein uL6 family.</text>
</comment>
<reference key="1">
    <citation type="journal article" date="2009" name="BMC Genomics">
        <title>Pseudogene accumulation in the evolutionary histories of Salmonella enterica serovars Paratyphi A and Typhi.</title>
        <authorList>
            <person name="Holt K.E."/>
            <person name="Thomson N.R."/>
            <person name="Wain J."/>
            <person name="Langridge G.C."/>
            <person name="Hasan R."/>
            <person name="Bhutta Z.A."/>
            <person name="Quail M.A."/>
            <person name="Norbertczak H."/>
            <person name="Walker D."/>
            <person name="Simmonds M."/>
            <person name="White B."/>
            <person name="Bason N."/>
            <person name="Mungall K."/>
            <person name="Dougan G."/>
            <person name="Parkhill J."/>
        </authorList>
    </citation>
    <scope>NUCLEOTIDE SEQUENCE [LARGE SCALE GENOMIC DNA]</scope>
    <source>
        <strain>AKU_12601</strain>
    </source>
</reference>
<name>RL6_SALPK</name>
<evidence type="ECO:0000255" key="1">
    <source>
        <dbReference type="HAMAP-Rule" id="MF_01365"/>
    </source>
</evidence>
<evidence type="ECO:0000305" key="2"/>
<keyword id="KW-0687">Ribonucleoprotein</keyword>
<keyword id="KW-0689">Ribosomal protein</keyword>
<keyword id="KW-0694">RNA-binding</keyword>
<keyword id="KW-0699">rRNA-binding</keyword>
<protein>
    <recommendedName>
        <fullName evidence="1">Large ribosomal subunit protein uL6</fullName>
    </recommendedName>
    <alternativeName>
        <fullName evidence="2">50S ribosomal protein L6</fullName>
    </alternativeName>
</protein>
<accession>B5BGX1</accession>